<sequence>MLKIFEKVFGSKHDKDIKKIKPLVDEINEIYATFASLSDDQLRAKSMALKSNLQEELTLIRQQNSDLSGKLENPDITISQIESINRELDELEKKYEEETAAALEKILPETFAIVKDTCRRLKGHTYQVMDHTMTWDMIPYDVQLLGGIVLHQGKVTEMATGEGKTLVSTLPAFLNALTGRGVHIVTVNDYLAQRDREWMSPVFEFHGIETGVILSGMRPEERKKEYACDITYGTNNEFGFDYLRDNMAGSPADLVQKEYYYGIVDEVDSVLIDEARTPLIISGPVPNANTSKFTEIKPWMERLVKNQQNLVAGYLAEAEKVVKEKPNDFQAALALLRAKRGQPKNTRLIKMLSQTGMAKLMQSAENEYLKDNSRRMHEVDDELYFSIDEKSNAIDLTDKGRDFLSKLSNQDSDLFLVPDVGAEIAAIESDEALDTEQKIKKKDEVYRLFSDRSEKLHNISQLLKAYSLFEKDDDYVVQNGQVMIVDEFTGRILPGRRYSDGLHQAIEAKENVKIEGETQTLATITIQNFFRLYKKLSGMTGTAETESAELFDIYKLDVVVIPTNRPIIRKDQDDYVYKTRKEKYAAIIGKIIELQKKGQPVLVGTASVDVSETLSRMLRAKKITHNVLNAKQHGREAEIVASAGQNGAVTIATNMAGRGTDIKLGEGVKELGGLYILGSERHESRRIDRQLRGRSGRQGDPGESIFYVSLEDNLMRLFGSDRVISIMDKLGHEEGDVIEHSMVTKSIERAQKKVEEQNFSIRKRLLEYDDVLNQQRDVIYKRRKGALTKKRLTADIFDLLHDYSENTVNQYAREFDVKGLEEQVLRDLSVEFRIESITFENEGVEKTAEQLYKAALEFYKRKEDVVPEEIMGQIEKYAVLNVIDQKWREHLREIDSLKEGINLRAYGQKDPLLEYKQEAYKLFVSMLGEIEHETLSLAFKLFPVTEEAREKIEQEQKKSQVQQDRLVARHEKAETAYENSGSRPEGRQEKKAENGKEPLQQPVIADKTPGRNDPCSCGSGKKYKNCCGK</sequence>
<dbReference type="EC" id="7.4.2.8" evidence="1"/>
<dbReference type="EMBL" id="CP001101">
    <property type="protein sequence ID" value="ACE04206.1"/>
    <property type="molecule type" value="Genomic_DNA"/>
</dbReference>
<dbReference type="SMR" id="B3EJ06"/>
<dbReference type="STRING" id="331678.Cphamn1_1274"/>
<dbReference type="KEGG" id="cpb:Cphamn1_1274"/>
<dbReference type="eggNOG" id="COG0653">
    <property type="taxonomic scope" value="Bacteria"/>
</dbReference>
<dbReference type="HOGENOM" id="CLU_005314_3_0_10"/>
<dbReference type="OrthoDB" id="9805579at2"/>
<dbReference type="GO" id="GO:0031522">
    <property type="term" value="C:cell envelope Sec protein transport complex"/>
    <property type="evidence" value="ECO:0007669"/>
    <property type="project" value="TreeGrafter"/>
</dbReference>
<dbReference type="GO" id="GO:0005829">
    <property type="term" value="C:cytosol"/>
    <property type="evidence" value="ECO:0007669"/>
    <property type="project" value="TreeGrafter"/>
</dbReference>
<dbReference type="GO" id="GO:0005886">
    <property type="term" value="C:plasma membrane"/>
    <property type="evidence" value="ECO:0007669"/>
    <property type="project" value="UniProtKB-SubCell"/>
</dbReference>
<dbReference type="GO" id="GO:0005524">
    <property type="term" value="F:ATP binding"/>
    <property type="evidence" value="ECO:0007669"/>
    <property type="project" value="UniProtKB-UniRule"/>
</dbReference>
<dbReference type="GO" id="GO:0046872">
    <property type="term" value="F:metal ion binding"/>
    <property type="evidence" value="ECO:0007669"/>
    <property type="project" value="UniProtKB-KW"/>
</dbReference>
<dbReference type="GO" id="GO:0008564">
    <property type="term" value="F:protein-exporting ATPase activity"/>
    <property type="evidence" value="ECO:0007669"/>
    <property type="project" value="UniProtKB-EC"/>
</dbReference>
<dbReference type="GO" id="GO:0065002">
    <property type="term" value="P:intracellular protein transmembrane transport"/>
    <property type="evidence" value="ECO:0007669"/>
    <property type="project" value="UniProtKB-UniRule"/>
</dbReference>
<dbReference type="GO" id="GO:0017038">
    <property type="term" value="P:protein import"/>
    <property type="evidence" value="ECO:0007669"/>
    <property type="project" value="InterPro"/>
</dbReference>
<dbReference type="GO" id="GO:0006605">
    <property type="term" value="P:protein targeting"/>
    <property type="evidence" value="ECO:0007669"/>
    <property type="project" value="UniProtKB-UniRule"/>
</dbReference>
<dbReference type="GO" id="GO:0043952">
    <property type="term" value="P:protein transport by the Sec complex"/>
    <property type="evidence" value="ECO:0007669"/>
    <property type="project" value="TreeGrafter"/>
</dbReference>
<dbReference type="CDD" id="cd17928">
    <property type="entry name" value="DEXDc_SecA"/>
    <property type="match status" value="1"/>
</dbReference>
<dbReference type="CDD" id="cd18803">
    <property type="entry name" value="SF2_C_secA"/>
    <property type="match status" value="1"/>
</dbReference>
<dbReference type="FunFam" id="3.40.50.300:FF:000246">
    <property type="entry name" value="Preprotein translocase subunit SecA"/>
    <property type="match status" value="1"/>
</dbReference>
<dbReference type="FunFam" id="3.40.50.300:FF:000694">
    <property type="entry name" value="Preprotein translocase subunit SecA"/>
    <property type="match status" value="1"/>
</dbReference>
<dbReference type="Gene3D" id="1.10.3060.10">
    <property type="entry name" value="Helical scaffold and wing domains of SecA"/>
    <property type="match status" value="1"/>
</dbReference>
<dbReference type="Gene3D" id="3.40.50.300">
    <property type="entry name" value="P-loop containing nucleotide triphosphate hydrolases"/>
    <property type="match status" value="3"/>
</dbReference>
<dbReference type="Gene3D" id="3.90.1440.10">
    <property type="entry name" value="SecA, preprotein cross-linking domain"/>
    <property type="match status" value="1"/>
</dbReference>
<dbReference type="HAMAP" id="MF_01382">
    <property type="entry name" value="SecA"/>
    <property type="match status" value="1"/>
</dbReference>
<dbReference type="InterPro" id="IPR014001">
    <property type="entry name" value="Helicase_ATP-bd"/>
</dbReference>
<dbReference type="InterPro" id="IPR001650">
    <property type="entry name" value="Helicase_C-like"/>
</dbReference>
<dbReference type="InterPro" id="IPR027417">
    <property type="entry name" value="P-loop_NTPase"/>
</dbReference>
<dbReference type="InterPro" id="IPR004027">
    <property type="entry name" value="SEC_C_motif"/>
</dbReference>
<dbReference type="InterPro" id="IPR000185">
    <property type="entry name" value="SecA"/>
</dbReference>
<dbReference type="InterPro" id="IPR020937">
    <property type="entry name" value="SecA_CS"/>
</dbReference>
<dbReference type="InterPro" id="IPR011115">
    <property type="entry name" value="SecA_DEAD"/>
</dbReference>
<dbReference type="InterPro" id="IPR014018">
    <property type="entry name" value="SecA_motor_DEAD"/>
</dbReference>
<dbReference type="InterPro" id="IPR011130">
    <property type="entry name" value="SecA_preprotein_X-link_dom"/>
</dbReference>
<dbReference type="InterPro" id="IPR044722">
    <property type="entry name" value="SecA_SF2_C"/>
</dbReference>
<dbReference type="InterPro" id="IPR011116">
    <property type="entry name" value="SecA_Wing/Scaffold"/>
</dbReference>
<dbReference type="InterPro" id="IPR036266">
    <property type="entry name" value="SecA_Wing/Scaffold_sf"/>
</dbReference>
<dbReference type="InterPro" id="IPR036670">
    <property type="entry name" value="SecA_X-link_sf"/>
</dbReference>
<dbReference type="NCBIfam" id="TIGR00963">
    <property type="entry name" value="secA"/>
    <property type="match status" value="1"/>
</dbReference>
<dbReference type="PANTHER" id="PTHR30612:SF0">
    <property type="entry name" value="CHLOROPLAST PROTEIN-TRANSPORTING ATPASE"/>
    <property type="match status" value="1"/>
</dbReference>
<dbReference type="PANTHER" id="PTHR30612">
    <property type="entry name" value="SECA INNER MEMBRANE COMPONENT OF SEC PROTEIN SECRETION SYSTEM"/>
    <property type="match status" value="1"/>
</dbReference>
<dbReference type="Pfam" id="PF21090">
    <property type="entry name" value="P-loop_SecA"/>
    <property type="match status" value="1"/>
</dbReference>
<dbReference type="Pfam" id="PF02810">
    <property type="entry name" value="SEC-C"/>
    <property type="match status" value="1"/>
</dbReference>
<dbReference type="Pfam" id="PF07517">
    <property type="entry name" value="SecA_DEAD"/>
    <property type="match status" value="1"/>
</dbReference>
<dbReference type="Pfam" id="PF01043">
    <property type="entry name" value="SecA_PP_bind"/>
    <property type="match status" value="1"/>
</dbReference>
<dbReference type="Pfam" id="PF07516">
    <property type="entry name" value="SecA_SW"/>
    <property type="match status" value="1"/>
</dbReference>
<dbReference type="PRINTS" id="PR00906">
    <property type="entry name" value="SECA"/>
</dbReference>
<dbReference type="SMART" id="SM00957">
    <property type="entry name" value="SecA_DEAD"/>
    <property type="match status" value="1"/>
</dbReference>
<dbReference type="SMART" id="SM00958">
    <property type="entry name" value="SecA_PP_bind"/>
    <property type="match status" value="1"/>
</dbReference>
<dbReference type="SUPFAM" id="SSF81886">
    <property type="entry name" value="Helical scaffold and wing domains of SecA"/>
    <property type="match status" value="1"/>
</dbReference>
<dbReference type="SUPFAM" id="SSF52540">
    <property type="entry name" value="P-loop containing nucleoside triphosphate hydrolases"/>
    <property type="match status" value="2"/>
</dbReference>
<dbReference type="SUPFAM" id="SSF81767">
    <property type="entry name" value="Pre-protein crosslinking domain of SecA"/>
    <property type="match status" value="1"/>
</dbReference>
<dbReference type="PROSITE" id="PS01312">
    <property type="entry name" value="SECA"/>
    <property type="match status" value="1"/>
</dbReference>
<dbReference type="PROSITE" id="PS51196">
    <property type="entry name" value="SECA_MOTOR_DEAD"/>
    <property type="match status" value="1"/>
</dbReference>
<gene>
    <name evidence="1" type="primary">secA</name>
    <name type="ordered locus">Cphamn1_1274</name>
</gene>
<reference key="1">
    <citation type="submission" date="2008-06" db="EMBL/GenBank/DDBJ databases">
        <title>Complete sequence of Chlorobium phaeobacteroides BS1.</title>
        <authorList>
            <consortium name="US DOE Joint Genome Institute"/>
            <person name="Lucas S."/>
            <person name="Copeland A."/>
            <person name="Lapidus A."/>
            <person name="Glavina del Rio T."/>
            <person name="Dalin E."/>
            <person name="Tice H."/>
            <person name="Bruce D."/>
            <person name="Goodwin L."/>
            <person name="Pitluck S."/>
            <person name="Schmutz J."/>
            <person name="Larimer F."/>
            <person name="Land M."/>
            <person name="Hauser L."/>
            <person name="Kyrpides N."/>
            <person name="Ovchinnikova G."/>
            <person name="Li T."/>
            <person name="Liu Z."/>
            <person name="Zhao F."/>
            <person name="Overmann J."/>
            <person name="Bryant D.A."/>
            <person name="Richardson P."/>
        </authorList>
    </citation>
    <scope>NUCLEOTIDE SEQUENCE [LARGE SCALE GENOMIC DNA]</scope>
    <source>
        <strain>BS1</strain>
    </source>
</reference>
<organism>
    <name type="scientific">Chlorobium phaeobacteroides (strain BS1)</name>
    <dbReference type="NCBI Taxonomy" id="331678"/>
    <lineage>
        <taxon>Bacteria</taxon>
        <taxon>Pseudomonadati</taxon>
        <taxon>Chlorobiota</taxon>
        <taxon>Chlorobiia</taxon>
        <taxon>Chlorobiales</taxon>
        <taxon>Chlorobiaceae</taxon>
        <taxon>Chlorobium/Pelodictyon group</taxon>
        <taxon>Chlorobium</taxon>
    </lineage>
</organism>
<proteinExistence type="inferred from homology"/>
<comment type="function">
    <text evidence="1">Part of the Sec protein translocase complex. Interacts with the SecYEG preprotein conducting channel. Has a central role in coupling the hydrolysis of ATP to the transfer of proteins into and across the cell membrane, serving as an ATP-driven molecular motor driving the stepwise translocation of polypeptide chains across the membrane.</text>
</comment>
<comment type="catalytic activity">
    <reaction evidence="1">
        <text>ATP + H2O + cellular proteinSide 1 = ADP + phosphate + cellular proteinSide 2.</text>
        <dbReference type="EC" id="7.4.2.8"/>
    </reaction>
</comment>
<comment type="cofactor">
    <cofactor evidence="1">
        <name>Zn(2+)</name>
        <dbReference type="ChEBI" id="CHEBI:29105"/>
    </cofactor>
    <text evidence="1">May bind 1 zinc ion per subunit.</text>
</comment>
<comment type="subunit">
    <text evidence="1">Monomer and homodimer. Part of the essential Sec protein translocation apparatus which comprises SecA, SecYEG and auxiliary proteins SecDF. Other proteins may also be involved.</text>
</comment>
<comment type="subcellular location">
    <subcellularLocation>
        <location evidence="1">Cell inner membrane</location>
        <topology evidence="1">Peripheral membrane protein</topology>
        <orientation evidence="1">Cytoplasmic side</orientation>
    </subcellularLocation>
    <subcellularLocation>
        <location evidence="1">Cytoplasm</location>
    </subcellularLocation>
    <text evidence="1">Distribution is 50-50.</text>
</comment>
<comment type="similarity">
    <text evidence="1">Belongs to the SecA family.</text>
</comment>
<name>SECA_CHLPB</name>
<feature type="chain" id="PRO_1000144990" description="Protein translocase subunit SecA">
    <location>
        <begin position="1"/>
        <end position="1029"/>
    </location>
</feature>
<feature type="region of interest" description="Disordered" evidence="2">
    <location>
        <begin position="953"/>
        <end position="1029"/>
    </location>
</feature>
<feature type="compositionally biased region" description="Basic and acidic residues" evidence="2">
    <location>
        <begin position="966"/>
        <end position="975"/>
    </location>
</feature>
<feature type="compositionally biased region" description="Basic and acidic residues" evidence="2">
    <location>
        <begin position="984"/>
        <end position="996"/>
    </location>
</feature>
<feature type="binding site" evidence="1">
    <location>
        <position position="143"/>
    </location>
    <ligand>
        <name>ATP</name>
        <dbReference type="ChEBI" id="CHEBI:30616"/>
    </ligand>
</feature>
<feature type="binding site" evidence="1">
    <location>
        <begin position="161"/>
        <end position="165"/>
    </location>
    <ligand>
        <name>ATP</name>
        <dbReference type="ChEBI" id="CHEBI:30616"/>
    </ligand>
</feature>
<feature type="binding site" evidence="1">
    <location>
        <position position="661"/>
    </location>
    <ligand>
        <name>ATP</name>
        <dbReference type="ChEBI" id="CHEBI:30616"/>
    </ligand>
</feature>
<feature type="binding site" evidence="1">
    <location>
        <position position="1015"/>
    </location>
    <ligand>
        <name>Zn(2+)</name>
        <dbReference type="ChEBI" id="CHEBI:29105"/>
    </ligand>
</feature>
<feature type="binding site" evidence="1">
    <location>
        <position position="1017"/>
    </location>
    <ligand>
        <name>Zn(2+)</name>
        <dbReference type="ChEBI" id="CHEBI:29105"/>
    </ligand>
</feature>
<feature type="binding site" evidence="1">
    <location>
        <position position="1026"/>
    </location>
    <ligand>
        <name>Zn(2+)</name>
        <dbReference type="ChEBI" id="CHEBI:29105"/>
    </ligand>
</feature>
<feature type="binding site" evidence="1">
    <location>
        <position position="1027"/>
    </location>
    <ligand>
        <name>Zn(2+)</name>
        <dbReference type="ChEBI" id="CHEBI:29105"/>
    </ligand>
</feature>
<keyword id="KW-0067">ATP-binding</keyword>
<keyword id="KW-0997">Cell inner membrane</keyword>
<keyword id="KW-1003">Cell membrane</keyword>
<keyword id="KW-0963">Cytoplasm</keyword>
<keyword id="KW-0472">Membrane</keyword>
<keyword id="KW-0479">Metal-binding</keyword>
<keyword id="KW-0547">Nucleotide-binding</keyword>
<keyword id="KW-0653">Protein transport</keyword>
<keyword id="KW-1278">Translocase</keyword>
<keyword id="KW-0811">Translocation</keyword>
<keyword id="KW-0813">Transport</keyword>
<keyword id="KW-0862">Zinc</keyword>
<accession>B3EJ06</accession>
<evidence type="ECO:0000255" key="1">
    <source>
        <dbReference type="HAMAP-Rule" id="MF_01382"/>
    </source>
</evidence>
<evidence type="ECO:0000256" key="2">
    <source>
        <dbReference type="SAM" id="MobiDB-lite"/>
    </source>
</evidence>
<protein>
    <recommendedName>
        <fullName evidence="1">Protein translocase subunit SecA</fullName>
        <ecNumber evidence="1">7.4.2.8</ecNumber>
    </recommendedName>
</protein>